<dbReference type="EC" id="4.3.3.7" evidence="1"/>
<dbReference type="EMBL" id="CP000356">
    <property type="protein sequence ID" value="ABF53444.1"/>
    <property type="molecule type" value="Genomic_DNA"/>
</dbReference>
<dbReference type="RefSeq" id="WP_011542024.1">
    <property type="nucleotide sequence ID" value="NC_008048.1"/>
</dbReference>
<dbReference type="SMR" id="Q1GSC8"/>
<dbReference type="STRING" id="317655.Sala_1731"/>
<dbReference type="KEGG" id="sal:Sala_1731"/>
<dbReference type="eggNOG" id="COG0329">
    <property type="taxonomic scope" value="Bacteria"/>
</dbReference>
<dbReference type="HOGENOM" id="CLU_049343_7_0_5"/>
<dbReference type="OrthoDB" id="9782828at2"/>
<dbReference type="UniPathway" id="UPA00034">
    <property type="reaction ID" value="UER00017"/>
</dbReference>
<dbReference type="Proteomes" id="UP000006578">
    <property type="component" value="Chromosome"/>
</dbReference>
<dbReference type="GO" id="GO:0005829">
    <property type="term" value="C:cytosol"/>
    <property type="evidence" value="ECO:0007669"/>
    <property type="project" value="TreeGrafter"/>
</dbReference>
<dbReference type="GO" id="GO:0008840">
    <property type="term" value="F:4-hydroxy-tetrahydrodipicolinate synthase activity"/>
    <property type="evidence" value="ECO:0007669"/>
    <property type="project" value="UniProtKB-UniRule"/>
</dbReference>
<dbReference type="GO" id="GO:0019877">
    <property type="term" value="P:diaminopimelate biosynthetic process"/>
    <property type="evidence" value="ECO:0007669"/>
    <property type="project" value="UniProtKB-UniRule"/>
</dbReference>
<dbReference type="GO" id="GO:0009089">
    <property type="term" value="P:lysine biosynthetic process via diaminopimelate"/>
    <property type="evidence" value="ECO:0007669"/>
    <property type="project" value="UniProtKB-UniRule"/>
</dbReference>
<dbReference type="CDD" id="cd00950">
    <property type="entry name" value="DHDPS"/>
    <property type="match status" value="1"/>
</dbReference>
<dbReference type="Gene3D" id="3.20.20.70">
    <property type="entry name" value="Aldolase class I"/>
    <property type="match status" value="1"/>
</dbReference>
<dbReference type="HAMAP" id="MF_00418">
    <property type="entry name" value="DapA"/>
    <property type="match status" value="1"/>
</dbReference>
<dbReference type="InterPro" id="IPR013785">
    <property type="entry name" value="Aldolase_TIM"/>
</dbReference>
<dbReference type="InterPro" id="IPR005263">
    <property type="entry name" value="DapA"/>
</dbReference>
<dbReference type="InterPro" id="IPR002220">
    <property type="entry name" value="DapA-like"/>
</dbReference>
<dbReference type="InterPro" id="IPR020625">
    <property type="entry name" value="Schiff_base-form_aldolases_AS"/>
</dbReference>
<dbReference type="InterPro" id="IPR020624">
    <property type="entry name" value="Schiff_base-form_aldolases_CS"/>
</dbReference>
<dbReference type="NCBIfam" id="TIGR00674">
    <property type="entry name" value="dapA"/>
    <property type="match status" value="1"/>
</dbReference>
<dbReference type="PANTHER" id="PTHR12128:SF66">
    <property type="entry name" value="4-HYDROXY-2-OXOGLUTARATE ALDOLASE, MITOCHONDRIAL"/>
    <property type="match status" value="1"/>
</dbReference>
<dbReference type="PANTHER" id="PTHR12128">
    <property type="entry name" value="DIHYDRODIPICOLINATE SYNTHASE"/>
    <property type="match status" value="1"/>
</dbReference>
<dbReference type="Pfam" id="PF00701">
    <property type="entry name" value="DHDPS"/>
    <property type="match status" value="1"/>
</dbReference>
<dbReference type="PIRSF" id="PIRSF001365">
    <property type="entry name" value="DHDPS"/>
    <property type="match status" value="1"/>
</dbReference>
<dbReference type="PRINTS" id="PR00146">
    <property type="entry name" value="DHPICSNTHASE"/>
</dbReference>
<dbReference type="SMART" id="SM01130">
    <property type="entry name" value="DHDPS"/>
    <property type="match status" value="1"/>
</dbReference>
<dbReference type="SUPFAM" id="SSF51569">
    <property type="entry name" value="Aldolase"/>
    <property type="match status" value="1"/>
</dbReference>
<dbReference type="PROSITE" id="PS00665">
    <property type="entry name" value="DHDPS_1"/>
    <property type="match status" value="1"/>
</dbReference>
<dbReference type="PROSITE" id="PS00666">
    <property type="entry name" value="DHDPS_2"/>
    <property type="match status" value="1"/>
</dbReference>
<proteinExistence type="inferred from homology"/>
<feature type="chain" id="PRO_1000050276" description="4-hydroxy-tetrahydrodipicolinate synthase">
    <location>
        <begin position="1"/>
        <end position="291"/>
    </location>
</feature>
<feature type="active site" description="Proton donor/acceptor" evidence="1">
    <location>
        <position position="132"/>
    </location>
</feature>
<feature type="active site" description="Schiff-base intermediate with substrate" evidence="1">
    <location>
        <position position="160"/>
    </location>
</feature>
<feature type="binding site" evidence="1">
    <location>
        <position position="44"/>
    </location>
    <ligand>
        <name>pyruvate</name>
        <dbReference type="ChEBI" id="CHEBI:15361"/>
    </ligand>
</feature>
<feature type="binding site" evidence="1">
    <location>
        <position position="202"/>
    </location>
    <ligand>
        <name>pyruvate</name>
        <dbReference type="ChEBI" id="CHEBI:15361"/>
    </ligand>
</feature>
<feature type="site" description="Part of a proton relay during catalysis" evidence="1">
    <location>
        <position position="43"/>
    </location>
</feature>
<feature type="site" description="Part of a proton relay during catalysis" evidence="1">
    <location>
        <position position="106"/>
    </location>
</feature>
<comment type="function">
    <text evidence="1">Catalyzes the condensation of (S)-aspartate-beta-semialdehyde [(S)-ASA] and pyruvate to 4-hydroxy-tetrahydrodipicolinate (HTPA).</text>
</comment>
<comment type="catalytic activity">
    <reaction evidence="1">
        <text>L-aspartate 4-semialdehyde + pyruvate = (2S,4S)-4-hydroxy-2,3,4,5-tetrahydrodipicolinate + H2O + H(+)</text>
        <dbReference type="Rhea" id="RHEA:34171"/>
        <dbReference type="ChEBI" id="CHEBI:15361"/>
        <dbReference type="ChEBI" id="CHEBI:15377"/>
        <dbReference type="ChEBI" id="CHEBI:15378"/>
        <dbReference type="ChEBI" id="CHEBI:67139"/>
        <dbReference type="ChEBI" id="CHEBI:537519"/>
        <dbReference type="EC" id="4.3.3.7"/>
    </reaction>
</comment>
<comment type="pathway">
    <text evidence="1">Amino-acid biosynthesis; L-lysine biosynthesis via DAP pathway; (S)-tetrahydrodipicolinate from L-aspartate: step 3/4.</text>
</comment>
<comment type="subunit">
    <text evidence="1">Homotetramer; dimer of dimers.</text>
</comment>
<comment type="subcellular location">
    <subcellularLocation>
        <location evidence="1">Cytoplasm</location>
    </subcellularLocation>
</comment>
<comment type="similarity">
    <text evidence="1">Belongs to the DapA family.</text>
</comment>
<comment type="caution">
    <text evidence="2">Was originally thought to be a dihydrodipicolinate synthase (DHDPS), catalyzing the condensation of (S)-aspartate-beta-semialdehyde [(S)-ASA] and pyruvate to dihydrodipicolinate (DHDP). However, it was shown in E.coli that the product of the enzymatic reaction is not dihydrodipicolinate but in fact (4S)-4-hydroxy-2,3,4,5-tetrahydro-(2S)-dipicolinic acid (HTPA), and that the consecutive dehydration reaction leading to DHDP is not spontaneous but catalyzed by DapB.</text>
</comment>
<name>DAPA_SPHAL</name>
<protein>
    <recommendedName>
        <fullName evidence="1">4-hydroxy-tetrahydrodipicolinate synthase</fullName>
        <shortName evidence="1">HTPA synthase</shortName>
        <ecNumber evidence="1">4.3.3.7</ecNumber>
    </recommendedName>
</protein>
<keyword id="KW-0028">Amino-acid biosynthesis</keyword>
<keyword id="KW-0963">Cytoplasm</keyword>
<keyword id="KW-0220">Diaminopimelate biosynthesis</keyword>
<keyword id="KW-0456">Lyase</keyword>
<keyword id="KW-0457">Lysine biosynthesis</keyword>
<keyword id="KW-1185">Reference proteome</keyword>
<keyword id="KW-0704">Schiff base</keyword>
<accession>Q1GSC8</accession>
<sequence length="291" mass="30567">MFSGSIPALVTPFRDGAFDAPTFARLVDWQVKEGTSALVPCGTTGESPTLSFDEHYRVIDCCIEAAAGRVPVIAGCGSNDTATAIRHMRHAQASGADAALIVAPYYNRPSQEGMIAHFKALADASDLPIVVYNVPGRTVADISAETMCKLAEIPTVVAVKDASGDLARVTVHRKGARHGFCQLSGNDELWLPHAVMGGAGCISVTANVAPRLCADFAAACAAGEWTRALALHDRLFDLHKAMFSDTSPGPVKYALSRVHDWFSPEVRLPIIPASGASRAVVDAALASAGVI</sequence>
<evidence type="ECO:0000255" key="1">
    <source>
        <dbReference type="HAMAP-Rule" id="MF_00418"/>
    </source>
</evidence>
<evidence type="ECO:0000305" key="2"/>
<reference key="1">
    <citation type="journal article" date="2009" name="Proc. Natl. Acad. Sci. U.S.A.">
        <title>The genomic basis of trophic strategy in marine bacteria.</title>
        <authorList>
            <person name="Lauro F.M."/>
            <person name="McDougald D."/>
            <person name="Thomas T."/>
            <person name="Williams T.J."/>
            <person name="Egan S."/>
            <person name="Rice S."/>
            <person name="DeMaere M.Z."/>
            <person name="Ting L."/>
            <person name="Ertan H."/>
            <person name="Johnson J."/>
            <person name="Ferriera S."/>
            <person name="Lapidus A."/>
            <person name="Anderson I."/>
            <person name="Kyrpides N."/>
            <person name="Munk A.C."/>
            <person name="Detter C."/>
            <person name="Han C.S."/>
            <person name="Brown M.V."/>
            <person name="Robb F.T."/>
            <person name="Kjelleberg S."/>
            <person name="Cavicchioli R."/>
        </authorList>
    </citation>
    <scope>NUCLEOTIDE SEQUENCE [LARGE SCALE GENOMIC DNA]</scope>
    <source>
        <strain>DSM 13593 / LMG 18877 / RB2256</strain>
    </source>
</reference>
<organism>
    <name type="scientific">Sphingopyxis alaskensis (strain DSM 13593 / LMG 18877 / RB2256)</name>
    <name type="common">Sphingomonas alaskensis</name>
    <dbReference type="NCBI Taxonomy" id="317655"/>
    <lineage>
        <taxon>Bacteria</taxon>
        <taxon>Pseudomonadati</taxon>
        <taxon>Pseudomonadota</taxon>
        <taxon>Alphaproteobacteria</taxon>
        <taxon>Sphingomonadales</taxon>
        <taxon>Sphingomonadaceae</taxon>
        <taxon>Sphingopyxis</taxon>
    </lineage>
</organism>
<gene>
    <name evidence="1" type="primary">dapA</name>
    <name type="ordered locus">Sala_1731</name>
</gene>